<accession>P48163</accession>
<accession>B4DZ70</accession>
<accession>Q16797</accession>
<accession>Q16855</accession>
<accession>Q53F72</accession>
<accession>Q5VWA2</accession>
<accession>Q9BWX8</accession>
<accession>Q9H1W3</accession>
<accession>Q9UIY4</accession>
<organism>
    <name type="scientific">Homo sapiens</name>
    <name type="common">Human</name>
    <dbReference type="NCBI Taxonomy" id="9606"/>
    <lineage>
        <taxon>Eukaryota</taxon>
        <taxon>Metazoa</taxon>
        <taxon>Chordata</taxon>
        <taxon>Craniata</taxon>
        <taxon>Vertebrata</taxon>
        <taxon>Euteleostomi</taxon>
        <taxon>Mammalia</taxon>
        <taxon>Eutheria</taxon>
        <taxon>Euarchontoglires</taxon>
        <taxon>Primates</taxon>
        <taxon>Haplorrhini</taxon>
        <taxon>Catarrhini</taxon>
        <taxon>Hominidae</taxon>
        <taxon>Homo</taxon>
    </lineage>
</organism>
<evidence type="ECO:0000250" key="1"/>
<evidence type="ECO:0000250" key="2">
    <source>
        <dbReference type="UniProtKB" id="P06801"/>
    </source>
</evidence>
<evidence type="ECO:0000250" key="3">
    <source>
        <dbReference type="UniProtKB" id="P23368"/>
    </source>
</evidence>
<evidence type="ECO:0000269" key="4">
    <source>
    </source>
</evidence>
<evidence type="ECO:0000269" key="5">
    <source>
    </source>
</evidence>
<evidence type="ECO:0000269" key="6">
    <source>
    </source>
</evidence>
<evidence type="ECO:0000269" key="7">
    <source>
    </source>
</evidence>
<evidence type="ECO:0000303" key="8">
    <source>
    </source>
</evidence>
<evidence type="ECO:0000305" key="9"/>
<evidence type="ECO:0000305" key="10">
    <source>
    </source>
</evidence>
<evidence type="ECO:0000312" key="11">
    <source>
        <dbReference type="HGNC" id="HGNC:6983"/>
    </source>
</evidence>
<evidence type="ECO:0007744" key="12">
    <source>
    </source>
</evidence>
<evidence type="ECO:0007829" key="13">
    <source>
        <dbReference type="PDB" id="2AW5"/>
    </source>
</evidence>
<evidence type="ECO:0007829" key="14">
    <source>
        <dbReference type="PDB" id="7X11"/>
    </source>
</evidence>
<sequence length="572" mass="64150">MEPEAPRRRHTHQRGYLLTRNPHLNKDLAFTLEERQQLNIHGLLPPSFNSQEIQVLRVVKNFEHLNSDFDRYLLLMDLQDRNEKLFYRVLTSDIEKFMPIVYTPTVGLACQQYSLVFRKPRGLFITIHDRGHIASVLNAWPEDVIKAIVVTDGERILGLGDLGCNGMGIPVGKLALYTACGGMNPQECLPVILDVGTENEELLKDPLYIGLRQRRVRGSEYDDFLDEFMEAVSSKYGMNCLIQFEDFANVNAFRLLNKYRNQYCTFNDDIQGTASVAVAGLLAALRITKNKLSDQTILFQGAGEAALGIAHLIVMALEKEGLPKEKAIKKIWLVDSKGLIVKGRASLTQEKEKFAHEHEEMKNLEAIVQEIKPTALIGVAAIGGAFSEQILKDMAAFNERPIIFALSNPTSKAECSAEQCYKITKGRAIFASGSPFDPVTLPNGQTLYPGQGNNSYVFPGVALGVVACGLRQITDNIFLTTAEVIAQQVSDKHLEEGRLYPPLNTIRDVSLKIAEKIVKDAYQEKTATVYPEPQNKEAFVRSQMYSTDYDQILPDCYSWPEEVQKIQTKVDQ</sequence>
<keyword id="KW-0002">3D-structure</keyword>
<keyword id="KW-0007">Acetylation</keyword>
<keyword id="KW-0025">Alternative splicing</keyword>
<keyword id="KW-0963">Cytoplasm</keyword>
<keyword id="KW-0479">Metal-binding</keyword>
<keyword id="KW-0521">NADP</keyword>
<keyword id="KW-0560">Oxidoreductase</keyword>
<keyword id="KW-0597">Phosphoprotein</keyword>
<keyword id="KW-1267">Proteomics identification</keyword>
<keyword id="KW-1185">Reference proteome</keyword>
<feature type="chain" id="PRO_0000160192" description="NADP-dependent malic enzyme">
    <location>
        <begin position="1"/>
        <end position="572"/>
    </location>
</feature>
<feature type="active site" description="Proton donor" evidence="3">
    <location>
        <position position="102"/>
    </location>
</feature>
<feature type="active site" description="Proton acceptor" evidence="3">
    <location>
        <position position="173"/>
    </location>
</feature>
<feature type="binding site" evidence="1">
    <location>
        <position position="155"/>
    </location>
    <ligand>
        <name>NADP(+)</name>
        <dbReference type="ChEBI" id="CHEBI:58349"/>
    </ligand>
</feature>
<feature type="binding site" evidence="3">
    <location>
        <position position="245"/>
    </location>
    <ligand>
        <name>a divalent metal cation</name>
        <dbReference type="ChEBI" id="CHEBI:60240"/>
    </ligand>
</feature>
<feature type="binding site" evidence="3">
    <location>
        <position position="246"/>
    </location>
    <ligand>
        <name>a divalent metal cation</name>
        <dbReference type="ChEBI" id="CHEBI:60240"/>
    </ligand>
</feature>
<feature type="binding site" evidence="3">
    <location>
        <position position="269"/>
    </location>
    <ligand>
        <name>a divalent metal cation</name>
        <dbReference type="ChEBI" id="CHEBI:60240"/>
    </ligand>
</feature>
<feature type="binding site" evidence="1">
    <location>
        <position position="269"/>
    </location>
    <ligand>
        <name>NADP(+)</name>
        <dbReference type="ChEBI" id="CHEBI:58349"/>
    </ligand>
</feature>
<feature type="binding site" evidence="1">
    <location>
        <begin position="301"/>
        <end position="318"/>
    </location>
    <ligand>
        <name>NADP(+)</name>
        <dbReference type="ChEBI" id="CHEBI:58349"/>
    </ligand>
</feature>
<feature type="binding site" evidence="1">
    <location>
        <position position="408"/>
    </location>
    <ligand>
        <name>NADP(+)</name>
        <dbReference type="ChEBI" id="CHEBI:58349"/>
    </ligand>
</feature>
<feature type="site" description="Important for activity" evidence="1">
    <location>
        <position position="269"/>
    </location>
</feature>
<feature type="modified residue" description="N-acetylmethionine" evidence="12">
    <location>
        <position position="1"/>
    </location>
</feature>
<feature type="modified residue" description="Phosphoserine" evidence="2">
    <location>
        <position position="336"/>
    </location>
</feature>
<feature type="splice variant" id="VSP_057051" description="In isoform 2." evidence="8">
    <location>
        <begin position="1"/>
        <end position="75"/>
    </location>
</feature>
<feature type="sequence conflict" description="In Ref. 4; BAD97137." evidence="9" ref="4">
    <original>F</original>
    <variation>S</variation>
    <location>
        <position position="266"/>
    </location>
</feature>
<feature type="sequence conflict" description="In Ref. 7; AAC50613." evidence="9" ref="7">
    <original>P</original>
    <variation>S</variation>
    <location>
        <position position="438"/>
    </location>
</feature>
<feature type="sequence conflict" description="In Ref. 2; AAB01380." evidence="9" ref="2">
    <original>NGQTLY</original>
    <variation>DGRTLF</variation>
    <location>
        <begin position="443"/>
        <end position="448"/>
    </location>
</feature>
<feature type="sequence conflict" description="In Ref. 2; AAB01380." evidence="9" ref="2">
    <original>QITDNI</original>
    <variation>HIDDKV</variation>
    <location>
        <begin position="472"/>
        <end position="477"/>
    </location>
</feature>
<feature type="sequence conflict" description="In Ref. 2; AAB01380." evidence="9" ref="2">
    <original>A</original>
    <variation>S</variation>
    <location>
        <position position="486"/>
    </location>
</feature>
<feature type="sequence conflict" description="In Ref. 2; AAB01380." evidence="9" ref="2">
    <original>E</original>
    <variation>Q</variation>
    <location>
        <position position="495"/>
    </location>
</feature>
<feature type="sequence conflict" description="In Ref. 2; AAB01380." evidence="9" ref="2">
    <original>E</original>
    <variation>V</variation>
    <location>
        <position position="515"/>
    </location>
</feature>
<feature type="sequence conflict" description="In Ref. 2; AAB01380." evidence="9" ref="2">
    <original>K</original>
    <variation>Q</variation>
    <location>
        <position position="519"/>
    </location>
</feature>
<feature type="sequence conflict" description="In Ref. 2; AAB01380." evidence="9" ref="2">
    <original>Q</original>
    <variation>K</variation>
    <location>
        <position position="523"/>
    </location>
</feature>
<feature type="sequence conflict" description="In Ref. 2; AAB01380." evidence="9" ref="2">
    <original>T</original>
    <variation>M</variation>
    <location>
        <position position="526"/>
    </location>
</feature>
<feature type="sequence conflict" description="In Ref. 2; AAB01380." evidence="9" ref="2">
    <original>A</original>
    <variation>E</variation>
    <location>
        <position position="538"/>
    </location>
</feature>
<feature type="sequence conflict" description="In Ref. 2; AAB01380." evidence="9" ref="2">
    <original>R</original>
    <variation>S</variation>
    <location>
        <position position="541"/>
    </location>
</feature>
<feature type="sequence conflict" description="In Ref. 2; AAB01380." evidence="9" ref="2">
    <original>D</original>
    <variation>N</variation>
    <location>
        <position position="548"/>
    </location>
</feature>
<feature type="sequence conflict" description="In Ref. 2; AAB01380." evidence="9" ref="2">
    <original>S</original>
    <variation>P</variation>
    <location>
        <position position="558"/>
    </location>
</feature>
<feature type="sequence conflict" description="In Ref. 2; AAB01380." evidence="9" ref="2">
    <original>E</original>
    <variation>A</variation>
    <location>
        <position position="561"/>
    </location>
</feature>
<feature type="sequence conflict" description="In Ref. 2; AAB01380." evidence="9" ref="2">
    <original>D</original>
    <variation>N</variation>
    <location>
        <position position="571"/>
    </location>
</feature>
<feature type="helix" evidence="14">
    <location>
        <begin position="16"/>
        <end position="19"/>
    </location>
</feature>
<feature type="turn" evidence="14">
    <location>
        <begin position="22"/>
        <end position="24"/>
    </location>
</feature>
<feature type="helix" evidence="14">
    <location>
        <begin position="27"/>
        <end position="29"/>
    </location>
</feature>
<feature type="helix" evidence="14">
    <location>
        <begin position="32"/>
        <end position="37"/>
    </location>
</feature>
<feature type="turn" evidence="13">
    <location>
        <begin position="41"/>
        <end position="43"/>
    </location>
</feature>
<feature type="helix" evidence="14">
    <location>
        <begin position="51"/>
        <end position="64"/>
    </location>
</feature>
<feature type="helix" evidence="14">
    <location>
        <begin position="68"/>
        <end position="79"/>
    </location>
</feature>
<feature type="helix" evidence="14">
    <location>
        <begin position="83"/>
        <end position="91"/>
    </location>
</feature>
<feature type="helix" evidence="14">
    <location>
        <begin position="94"/>
        <end position="101"/>
    </location>
</feature>
<feature type="helix" evidence="14">
    <location>
        <begin position="105"/>
        <end position="111"/>
    </location>
</feature>
<feature type="helix" evidence="14">
    <location>
        <begin position="113"/>
        <end position="116"/>
    </location>
</feature>
<feature type="strand" evidence="14">
    <location>
        <begin position="122"/>
        <end position="126"/>
    </location>
</feature>
<feature type="helix" evidence="14">
    <location>
        <begin position="127"/>
        <end position="129"/>
    </location>
</feature>
<feature type="helix" evidence="14">
    <location>
        <begin position="133"/>
        <end position="137"/>
    </location>
</feature>
<feature type="strand" evidence="14">
    <location>
        <begin position="147"/>
        <end position="151"/>
    </location>
</feature>
<feature type="strand" evidence="14">
    <location>
        <begin position="153"/>
        <end position="156"/>
    </location>
</feature>
<feature type="turn" evidence="14">
    <location>
        <begin position="157"/>
        <end position="159"/>
    </location>
</feature>
<feature type="helix" evidence="14">
    <location>
        <begin position="163"/>
        <end position="167"/>
    </location>
</feature>
<feature type="helix" evidence="14">
    <location>
        <begin position="168"/>
        <end position="181"/>
    </location>
</feature>
<feature type="helix" evidence="14">
    <location>
        <begin position="185"/>
        <end position="187"/>
    </location>
</feature>
<feature type="strand" evidence="14">
    <location>
        <begin position="188"/>
        <end position="194"/>
    </location>
</feature>
<feature type="helix" evidence="14">
    <location>
        <begin position="200"/>
        <end position="204"/>
    </location>
</feature>
<feature type="helix" evidence="14">
    <location>
        <begin position="218"/>
        <end position="236"/>
    </location>
</feature>
<feature type="strand" evidence="14">
    <location>
        <begin position="240"/>
        <end position="244"/>
    </location>
</feature>
<feature type="helix" evidence="14">
    <location>
        <begin position="249"/>
        <end position="259"/>
    </location>
</feature>
<feature type="turn" evidence="14">
    <location>
        <begin position="260"/>
        <end position="262"/>
    </location>
</feature>
<feature type="strand" evidence="14">
    <location>
        <begin position="263"/>
        <end position="267"/>
    </location>
</feature>
<feature type="turn" evidence="14">
    <location>
        <begin position="268"/>
        <end position="270"/>
    </location>
</feature>
<feature type="helix" evidence="14">
    <location>
        <begin position="271"/>
        <end position="288"/>
    </location>
</feature>
<feature type="helix" evidence="14">
    <location>
        <begin position="292"/>
        <end position="294"/>
    </location>
</feature>
<feature type="strand" evidence="14">
    <location>
        <begin position="297"/>
        <end position="301"/>
    </location>
</feature>
<feature type="helix" evidence="14">
    <location>
        <begin position="304"/>
        <end position="319"/>
    </location>
</feature>
<feature type="helix" evidence="14">
    <location>
        <begin position="324"/>
        <end position="329"/>
    </location>
</feature>
<feature type="strand" evidence="14">
    <location>
        <begin position="331"/>
        <end position="335"/>
    </location>
</feature>
<feature type="helix" evidence="14">
    <location>
        <begin position="349"/>
        <end position="352"/>
    </location>
</feature>
<feature type="helix" evidence="14">
    <location>
        <begin position="364"/>
        <end position="371"/>
    </location>
</feature>
<feature type="strand" evidence="14">
    <location>
        <begin position="374"/>
        <end position="378"/>
    </location>
</feature>
<feature type="helix" evidence="14">
    <location>
        <begin position="388"/>
        <end position="397"/>
    </location>
</feature>
<feature type="strand" evidence="14">
    <location>
        <begin position="402"/>
        <end position="405"/>
    </location>
</feature>
<feature type="helix" evidence="14">
    <location>
        <begin position="410"/>
        <end position="412"/>
    </location>
</feature>
<feature type="helix" evidence="14">
    <location>
        <begin position="417"/>
        <end position="423"/>
    </location>
</feature>
<feature type="turn" evidence="14">
    <location>
        <begin position="424"/>
        <end position="426"/>
    </location>
</feature>
<feature type="strand" evidence="14">
    <location>
        <begin position="429"/>
        <end position="434"/>
    </location>
</feature>
<feature type="helix" evidence="14">
    <location>
        <begin position="454"/>
        <end position="456"/>
    </location>
</feature>
<feature type="helix" evidence="14">
    <location>
        <begin position="458"/>
        <end position="468"/>
    </location>
</feature>
<feature type="helix" evidence="14">
    <location>
        <begin position="475"/>
        <end position="487"/>
    </location>
</feature>
<feature type="helix" evidence="14">
    <location>
        <begin position="491"/>
        <end position="495"/>
    </location>
</feature>
<feature type="helix" evidence="14">
    <location>
        <begin position="503"/>
        <end position="505"/>
    </location>
</feature>
<feature type="helix" evidence="14">
    <location>
        <begin position="506"/>
        <end position="523"/>
    </location>
</feature>
<feature type="strand" evidence="14">
    <location>
        <begin position="529"/>
        <end position="531"/>
    </location>
</feature>
<feature type="helix" evidence="14">
    <location>
        <begin position="536"/>
        <end position="541"/>
    </location>
</feature>
<feature type="helix" evidence="14">
    <location>
        <begin position="561"/>
        <end position="564"/>
    </location>
</feature>
<comment type="function">
    <text evidence="4 5 6 7">Catalyzes the oxidative decarboxylation of (S)-malate in the presence of NADP(+) and divalent metal ions, and decarboxylation of oxaloacetate.</text>
</comment>
<comment type="catalytic activity">
    <reaction evidence="4 5 6 7">
        <text>(S)-malate + NADP(+) = pyruvate + CO2 + NADPH</text>
        <dbReference type="Rhea" id="RHEA:18253"/>
        <dbReference type="ChEBI" id="CHEBI:15361"/>
        <dbReference type="ChEBI" id="CHEBI:15589"/>
        <dbReference type="ChEBI" id="CHEBI:16526"/>
        <dbReference type="ChEBI" id="CHEBI:57783"/>
        <dbReference type="ChEBI" id="CHEBI:58349"/>
        <dbReference type="EC" id="1.1.1.40"/>
    </reaction>
    <physiologicalReaction direction="left-to-right" evidence="10">
        <dbReference type="Rhea" id="RHEA:18254"/>
    </physiologicalReaction>
    <physiologicalReaction direction="right-to-left" evidence="10">
        <dbReference type="Rhea" id="RHEA:18255"/>
    </physiologicalReaction>
</comment>
<comment type="catalytic activity">
    <reaction evidence="5">
        <text>oxaloacetate + H(+) = pyruvate + CO2</text>
        <dbReference type="Rhea" id="RHEA:15641"/>
        <dbReference type="ChEBI" id="CHEBI:15361"/>
        <dbReference type="ChEBI" id="CHEBI:15378"/>
        <dbReference type="ChEBI" id="CHEBI:16452"/>
        <dbReference type="ChEBI" id="CHEBI:16526"/>
        <dbReference type="EC" id="1.1.1.40"/>
    </reaction>
    <physiologicalReaction direction="left-to-right" evidence="10">
        <dbReference type="Rhea" id="RHEA:15642"/>
    </physiologicalReaction>
</comment>
<comment type="cofactor">
    <cofactor evidence="5">
        <name>Mg(2+)</name>
        <dbReference type="ChEBI" id="CHEBI:18420"/>
    </cofactor>
    <cofactor evidence="4 5 7">
        <name>Mn(2+)</name>
        <dbReference type="ChEBI" id="CHEBI:29035"/>
    </cofactor>
    <text evidence="5">Divalent metal cations. Prefers magnesium or manganese.</text>
</comment>
<comment type="biophysicochemical properties">
    <kinetics>
        <KM evidence="6">271 uM for (S)-malate</KM>
        <KM evidence="5">0.24 mM for (S)-malate (in the presence of Mg(2+) or Mn(2+))</KM>
        <KM evidence="5">1.39 uM for NADP</KM>
        <KM evidence="5">7.2 mM for pyruvate</KM>
        <KM evidence="5">3.1 uM for NADPH</KM>
        <KM evidence="4">112 uM for (S)-malate</KM>
        <KM evidence="7">0.29 mM for (S)-malate</KM>
        <KM evidence="7">1.9 uM for NADP</KM>
        <KM evidence="7">0.12 uM for Mn(2+)</KM>
    </kinetics>
    <phDependence>
        <text evidence="5">Optimum pH is 7.8-8.1.</text>
    </phDependence>
</comment>
<comment type="subunit">
    <text evidence="5">Homotetramer.</text>
</comment>
<comment type="interaction">
    <interactant intactId="EBI-11958484">
        <id>P48163</id>
    </interactant>
    <interactant intactId="EBI-11958484">
        <id>P48163</id>
        <label>ME1</label>
    </interactant>
    <organismsDiffer>false</organismsDiffer>
    <experiments>5</experiments>
</comment>
<comment type="interaction">
    <interactant intactId="EBI-11958484">
        <id>P48163</id>
    </interactant>
    <interactant intactId="EBI-2211322">
        <id>P11498</id>
        <label>PC</label>
    </interactant>
    <organismsDiffer>false</organismsDiffer>
    <experiments>14</experiments>
</comment>
<comment type="subcellular location">
    <subcellularLocation>
        <location evidence="6">Cytoplasm</location>
    </subcellularLocation>
</comment>
<comment type="alternative products">
    <event type="alternative splicing"/>
    <isoform>
        <id>P48163-1</id>
        <name>1</name>
        <sequence type="displayed"/>
    </isoform>
    <isoform>
        <id>P48163-2</id>
        <name>2</name>
        <sequence type="described" ref="VSP_057051"/>
    </isoform>
</comment>
<comment type="tissue specificity">
    <text evidence="4 6">Expressed in all tissues tested including liver, placenta and white adipose tissue.</text>
</comment>
<comment type="similarity">
    <text evidence="9">Belongs to the malic enzymes family.</text>
</comment>
<dbReference type="EC" id="1.1.1.40" evidence="4 5 6 7"/>
<dbReference type="EMBL" id="X77244">
    <property type="protein sequence ID" value="CAA54460.1"/>
    <property type="molecule type" value="mRNA"/>
</dbReference>
<dbReference type="EMBL" id="L34035">
    <property type="protein sequence ID" value="AAB01380.1"/>
    <property type="molecule type" value="mRNA"/>
</dbReference>
<dbReference type="EMBL" id="AK302777">
    <property type="protein sequence ID" value="BAG63982.1"/>
    <property type="molecule type" value="mRNA"/>
</dbReference>
<dbReference type="EMBL" id="AK223417">
    <property type="protein sequence ID" value="BAD97137.1"/>
    <property type="molecule type" value="mRNA"/>
</dbReference>
<dbReference type="EMBL" id="AL049699">
    <property type="status" value="NOT_ANNOTATED_CDS"/>
    <property type="molecule type" value="Genomic_DNA"/>
</dbReference>
<dbReference type="EMBL" id="AL136970">
    <property type="status" value="NOT_ANNOTATED_CDS"/>
    <property type="molecule type" value="Genomic_DNA"/>
</dbReference>
<dbReference type="EMBL" id="AL391416">
    <property type="status" value="NOT_ANNOTATED_CDS"/>
    <property type="molecule type" value="Genomic_DNA"/>
</dbReference>
<dbReference type="EMBL" id="BC025246">
    <property type="protein sequence ID" value="AAH25246.1"/>
    <property type="molecule type" value="mRNA"/>
</dbReference>
<dbReference type="EMBL" id="U43944">
    <property type="protein sequence ID" value="AAC50613.1"/>
    <property type="molecule type" value="mRNA"/>
</dbReference>
<dbReference type="CCDS" id="CCDS34492.1">
    <molecule id="P48163-1"/>
</dbReference>
<dbReference type="PIR" id="JC4160">
    <property type="entry name" value="JC4160"/>
</dbReference>
<dbReference type="PIR" id="S44415">
    <property type="entry name" value="S44415"/>
</dbReference>
<dbReference type="RefSeq" id="NP_002386.1">
    <molecule id="P48163-1"/>
    <property type="nucleotide sequence ID" value="NM_002395.6"/>
</dbReference>
<dbReference type="RefSeq" id="XP_011534138.1">
    <property type="nucleotide sequence ID" value="XM_011535836.2"/>
</dbReference>
<dbReference type="PDB" id="2AW5">
    <property type="method" value="X-ray"/>
    <property type="resolution" value="2.50 A"/>
    <property type="chains" value="A/B/C=13-564"/>
</dbReference>
<dbReference type="PDB" id="3WJA">
    <property type="method" value="X-ray"/>
    <property type="resolution" value="2.55 A"/>
    <property type="chains" value="A/B=1-572"/>
</dbReference>
<dbReference type="PDB" id="7X11">
    <property type="method" value="X-ray"/>
    <property type="resolution" value="2.07 A"/>
    <property type="chains" value="A/B/C/D=1-572"/>
</dbReference>
<dbReference type="PDB" id="7X12">
    <property type="method" value="X-ray"/>
    <property type="resolution" value="2.07 A"/>
    <property type="chains" value="A/B/C/D=1-572"/>
</dbReference>
<dbReference type="PDBsum" id="2AW5"/>
<dbReference type="PDBsum" id="3WJA"/>
<dbReference type="PDBsum" id="7X11"/>
<dbReference type="PDBsum" id="7X12"/>
<dbReference type="SMR" id="P48163"/>
<dbReference type="BioGRID" id="110363">
    <property type="interactions" value="69"/>
</dbReference>
<dbReference type="ComplexPortal" id="CPX-7142">
    <property type="entry name" value="Hydride transfer complex"/>
</dbReference>
<dbReference type="FunCoup" id="P48163">
    <property type="interactions" value="2177"/>
</dbReference>
<dbReference type="IntAct" id="P48163">
    <property type="interactions" value="27"/>
</dbReference>
<dbReference type="MINT" id="P48163"/>
<dbReference type="STRING" id="9606.ENSP00000358719"/>
<dbReference type="BindingDB" id="P48163"/>
<dbReference type="ChEMBL" id="CHEMBL3495"/>
<dbReference type="DrugBank" id="DB00157">
    <property type="generic name" value="NADH"/>
</dbReference>
<dbReference type="DrugBank" id="DB03461">
    <property type="generic name" value="Nicotinamide adenine dinucleotide phosphate"/>
</dbReference>
<dbReference type="GlyGen" id="P48163">
    <property type="glycosylation" value="1 site, 1 O-linked glycan (1 site)"/>
</dbReference>
<dbReference type="iPTMnet" id="P48163"/>
<dbReference type="MetOSite" id="P48163"/>
<dbReference type="PhosphoSitePlus" id="P48163"/>
<dbReference type="SwissPalm" id="P48163"/>
<dbReference type="BioMuta" id="ME1"/>
<dbReference type="DMDM" id="1346484"/>
<dbReference type="REPRODUCTION-2DPAGE" id="IPI00008215"/>
<dbReference type="jPOST" id="P48163"/>
<dbReference type="MassIVE" id="P48163"/>
<dbReference type="PaxDb" id="9606-ENSP00000358719"/>
<dbReference type="PeptideAtlas" id="P48163"/>
<dbReference type="ProteomicsDB" id="5576"/>
<dbReference type="ProteomicsDB" id="55867">
    <molecule id="P48163-1"/>
</dbReference>
<dbReference type="Pumba" id="P48163"/>
<dbReference type="Antibodypedia" id="1633">
    <property type="antibodies" value="369 antibodies from 33 providers"/>
</dbReference>
<dbReference type="DNASU" id="4199"/>
<dbReference type="Ensembl" id="ENST00000369705.4">
    <molecule id="P48163-1"/>
    <property type="protein sequence ID" value="ENSP00000358719.3"/>
    <property type="gene ID" value="ENSG00000065833.9"/>
</dbReference>
<dbReference type="GeneID" id="4199"/>
<dbReference type="KEGG" id="hsa:4199"/>
<dbReference type="MANE-Select" id="ENST00000369705.4">
    <property type="protein sequence ID" value="ENSP00000358719.3"/>
    <property type="RefSeq nucleotide sequence ID" value="NM_002395.6"/>
    <property type="RefSeq protein sequence ID" value="NP_002386.1"/>
</dbReference>
<dbReference type="UCSC" id="uc003pjy.4">
    <molecule id="P48163-1"/>
    <property type="organism name" value="human"/>
</dbReference>
<dbReference type="AGR" id="HGNC:6983"/>
<dbReference type="CTD" id="4199"/>
<dbReference type="DisGeNET" id="4199"/>
<dbReference type="GeneCards" id="ME1"/>
<dbReference type="HGNC" id="HGNC:6983">
    <property type="gene designation" value="ME1"/>
</dbReference>
<dbReference type="HPA" id="ENSG00000065833">
    <property type="expression patterns" value="Low tissue specificity"/>
</dbReference>
<dbReference type="MIM" id="154250">
    <property type="type" value="gene"/>
</dbReference>
<dbReference type="neXtProt" id="NX_P48163"/>
<dbReference type="OpenTargets" id="ENSG00000065833"/>
<dbReference type="PharmGKB" id="PA30723"/>
<dbReference type="VEuPathDB" id="HostDB:ENSG00000065833"/>
<dbReference type="eggNOG" id="KOG1257">
    <property type="taxonomic scope" value="Eukaryota"/>
</dbReference>
<dbReference type="GeneTree" id="ENSGT00950000183134"/>
<dbReference type="HOGENOM" id="CLU_011405_5_0_1"/>
<dbReference type="InParanoid" id="P48163"/>
<dbReference type="OMA" id="QIVNHMV"/>
<dbReference type="OrthoDB" id="5365701at2759"/>
<dbReference type="PAN-GO" id="P48163">
    <property type="GO annotations" value="4 GO annotations based on evolutionary models"/>
</dbReference>
<dbReference type="PhylomeDB" id="P48163"/>
<dbReference type="TreeFam" id="TF300537"/>
<dbReference type="BRENDA" id="1.1.1.40">
    <property type="organism ID" value="2681"/>
</dbReference>
<dbReference type="PathwayCommons" id="P48163"/>
<dbReference type="Reactome" id="R-HSA-1989781">
    <property type="pathway name" value="PPARA activates gene expression"/>
</dbReference>
<dbReference type="Reactome" id="R-HSA-70268">
    <property type="pathway name" value="Pyruvate metabolism"/>
</dbReference>
<dbReference type="Reactome" id="R-HSA-9818025">
    <property type="pathway name" value="NFE2L2 regulating TCA cycle genes"/>
</dbReference>
<dbReference type="Reactome" id="R-HSA-9861718">
    <property type="pathway name" value="Regulation of pyruvate metabolism"/>
</dbReference>
<dbReference type="SABIO-RK" id="P48163"/>
<dbReference type="SignaLink" id="P48163"/>
<dbReference type="SIGNOR" id="P48163"/>
<dbReference type="BioGRID-ORCS" id="4199">
    <property type="hits" value="24 hits in 1166 CRISPR screens"/>
</dbReference>
<dbReference type="ChiTaRS" id="ME1">
    <property type="organism name" value="human"/>
</dbReference>
<dbReference type="EvolutionaryTrace" id="P48163"/>
<dbReference type="GeneWiki" id="ME1"/>
<dbReference type="GeneWiki" id="ME1_(gene)"/>
<dbReference type="GenomeRNAi" id="4199"/>
<dbReference type="Pharos" id="P48163">
    <property type="development level" value="Tchem"/>
</dbReference>
<dbReference type="PRO" id="PR:P48163"/>
<dbReference type="Proteomes" id="UP000005640">
    <property type="component" value="Chromosome 6"/>
</dbReference>
<dbReference type="RNAct" id="P48163">
    <property type="molecule type" value="protein"/>
</dbReference>
<dbReference type="Bgee" id="ENSG00000065833">
    <property type="expression patterns" value="Expressed in skeletal muscle tissue of biceps brachii and 203 other cell types or tissues"/>
</dbReference>
<dbReference type="GO" id="GO:0005737">
    <property type="term" value="C:cytoplasm"/>
    <property type="evidence" value="ECO:0000314"/>
    <property type="project" value="ComplexPortal"/>
</dbReference>
<dbReference type="GO" id="GO:0005829">
    <property type="term" value="C:cytosol"/>
    <property type="evidence" value="ECO:0000250"/>
    <property type="project" value="UniProtKB"/>
</dbReference>
<dbReference type="GO" id="GO:0005739">
    <property type="term" value="C:mitochondrion"/>
    <property type="evidence" value="ECO:0000318"/>
    <property type="project" value="GO_Central"/>
</dbReference>
<dbReference type="GO" id="GO:0043531">
    <property type="term" value="F:ADP binding"/>
    <property type="evidence" value="ECO:0000304"/>
    <property type="project" value="UniProtKB"/>
</dbReference>
<dbReference type="GO" id="GO:0009055">
    <property type="term" value="F:electron transfer activity"/>
    <property type="evidence" value="ECO:0000304"/>
    <property type="project" value="UniProtKB"/>
</dbReference>
<dbReference type="GO" id="GO:0042802">
    <property type="term" value="F:identical protein binding"/>
    <property type="evidence" value="ECO:0000353"/>
    <property type="project" value="IntAct"/>
</dbReference>
<dbReference type="GO" id="GO:0000287">
    <property type="term" value="F:magnesium ion binding"/>
    <property type="evidence" value="ECO:0000314"/>
    <property type="project" value="UniProtKB"/>
</dbReference>
<dbReference type="GO" id="GO:0004473">
    <property type="term" value="F:malate dehydrogenase (decarboxylating) (NADP+) activity"/>
    <property type="evidence" value="ECO:0000314"/>
    <property type="project" value="UniProtKB"/>
</dbReference>
<dbReference type="GO" id="GO:0004470">
    <property type="term" value="F:malic enzyme activity"/>
    <property type="evidence" value="ECO:0000314"/>
    <property type="project" value="UniProtKB"/>
</dbReference>
<dbReference type="GO" id="GO:0030145">
    <property type="term" value="F:manganese ion binding"/>
    <property type="evidence" value="ECO:0000314"/>
    <property type="project" value="UniProtKB"/>
</dbReference>
<dbReference type="GO" id="GO:0051287">
    <property type="term" value="F:NAD binding"/>
    <property type="evidence" value="ECO:0000304"/>
    <property type="project" value="UniProtKB"/>
</dbReference>
<dbReference type="GO" id="GO:0050661">
    <property type="term" value="F:NADP binding"/>
    <property type="evidence" value="ECO:0000304"/>
    <property type="project" value="UniProtKB"/>
</dbReference>
<dbReference type="GO" id="GO:0008948">
    <property type="term" value="F:oxaloacetate decarboxylase activity"/>
    <property type="evidence" value="ECO:0000314"/>
    <property type="project" value="UniProtKB"/>
</dbReference>
<dbReference type="GO" id="GO:0005975">
    <property type="term" value="P:carbohydrate metabolic process"/>
    <property type="evidence" value="ECO:0000303"/>
    <property type="project" value="ProtInc"/>
</dbReference>
<dbReference type="GO" id="GO:0006108">
    <property type="term" value="P:malate metabolic process"/>
    <property type="evidence" value="ECO:0000314"/>
    <property type="project" value="UniProtKB"/>
</dbReference>
<dbReference type="GO" id="GO:0006734">
    <property type="term" value="P:NADH metabolic process"/>
    <property type="evidence" value="ECO:0000314"/>
    <property type="project" value="ComplexPortal"/>
</dbReference>
<dbReference type="GO" id="GO:0006739">
    <property type="term" value="P:NADP metabolic process"/>
    <property type="evidence" value="ECO:0000314"/>
    <property type="project" value="ComplexPortal"/>
</dbReference>
<dbReference type="GO" id="GO:0009165">
    <property type="term" value="P:nucleotide biosynthetic process"/>
    <property type="evidence" value="ECO:0000304"/>
    <property type="project" value="UniProtKB"/>
</dbReference>
<dbReference type="GO" id="GO:0051289">
    <property type="term" value="P:protein homotetramerization"/>
    <property type="evidence" value="ECO:0000314"/>
    <property type="project" value="UniProtKB"/>
</dbReference>
<dbReference type="GO" id="GO:0006090">
    <property type="term" value="P:pyruvate metabolic process"/>
    <property type="evidence" value="ECO:0000318"/>
    <property type="project" value="GO_Central"/>
</dbReference>
<dbReference type="GO" id="GO:1902031">
    <property type="term" value="P:regulation of NADP metabolic process"/>
    <property type="evidence" value="ECO:0000315"/>
    <property type="project" value="CACAO"/>
</dbReference>
<dbReference type="GO" id="GO:0009743">
    <property type="term" value="P:response to carbohydrate"/>
    <property type="evidence" value="ECO:0000304"/>
    <property type="project" value="UniProtKB"/>
</dbReference>
<dbReference type="GO" id="GO:0009725">
    <property type="term" value="P:response to hormone"/>
    <property type="evidence" value="ECO:0000250"/>
    <property type="project" value="UniProtKB"/>
</dbReference>
<dbReference type="CDD" id="cd05312">
    <property type="entry name" value="NAD_bind_1_malic_enz"/>
    <property type="match status" value="1"/>
</dbReference>
<dbReference type="FunFam" id="3.40.50.10380:FF:000004">
    <property type="entry name" value="Malic enzyme"/>
    <property type="match status" value="1"/>
</dbReference>
<dbReference type="FunFam" id="3.40.50.720:FF:000060">
    <property type="entry name" value="Malic enzyme"/>
    <property type="match status" value="1"/>
</dbReference>
<dbReference type="Gene3D" id="3.40.50.10380">
    <property type="entry name" value="Malic enzyme, N-terminal domain"/>
    <property type="match status" value="1"/>
</dbReference>
<dbReference type="Gene3D" id="3.40.50.720">
    <property type="entry name" value="NAD(P)-binding Rossmann-like Domain"/>
    <property type="match status" value="1"/>
</dbReference>
<dbReference type="InterPro" id="IPR046346">
    <property type="entry name" value="Aminoacid_DH-like_N_sf"/>
</dbReference>
<dbReference type="InterPro" id="IPR015884">
    <property type="entry name" value="Malic_enzyme_CS"/>
</dbReference>
<dbReference type="InterPro" id="IPR012301">
    <property type="entry name" value="Malic_N_dom"/>
</dbReference>
<dbReference type="InterPro" id="IPR037062">
    <property type="entry name" value="Malic_N_dom_sf"/>
</dbReference>
<dbReference type="InterPro" id="IPR012302">
    <property type="entry name" value="Malic_NAD-bd"/>
</dbReference>
<dbReference type="InterPro" id="IPR001891">
    <property type="entry name" value="Malic_OxRdtase"/>
</dbReference>
<dbReference type="InterPro" id="IPR036291">
    <property type="entry name" value="NAD(P)-bd_dom_sf"/>
</dbReference>
<dbReference type="NCBIfam" id="NF010052">
    <property type="entry name" value="PRK13529.1"/>
    <property type="match status" value="1"/>
</dbReference>
<dbReference type="PANTHER" id="PTHR23406">
    <property type="entry name" value="MALIC ENZYME-RELATED"/>
    <property type="match status" value="1"/>
</dbReference>
<dbReference type="PANTHER" id="PTHR23406:SF17">
    <property type="entry name" value="NADP-DEPENDENT MALIC ENZYME"/>
    <property type="match status" value="1"/>
</dbReference>
<dbReference type="Pfam" id="PF00390">
    <property type="entry name" value="malic"/>
    <property type="match status" value="1"/>
</dbReference>
<dbReference type="Pfam" id="PF03949">
    <property type="entry name" value="Malic_M"/>
    <property type="match status" value="1"/>
</dbReference>
<dbReference type="PIRSF" id="PIRSF000106">
    <property type="entry name" value="ME"/>
    <property type="match status" value="1"/>
</dbReference>
<dbReference type="PRINTS" id="PR00072">
    <property type="entry name" value="MALOXRDTASE"/>
</dbReference>
<dbReference type="SMART" id="SM01274">
    <property type="entry name" value="malic"/>
    <property type="match status" value="1"/>
</dbReference>
<dbReference type="SMART" id="SM00919">
    <property type="entry name" value="Malic_M"/>
    <property type="match status" value="1"/>
</dbReference>
<dbReference type="SUPFAM" id="SSF53223">
    <property type="entry name" value="Aminoacid dehydrogenase-like, N-terminal domain"/>
    <property type="match status" value="1"/>
</dbReference>
<dbReference type="SUPFAM" id="SSF51735">
    <property type="entry name" value="NAD(P)-binding Rossmann-fold domains"/>
    <property type="match status" value="1"/>
</dbReference>
<dbReference type="PROSITE" id="PS00331">
    <property type="entry name" value="MALIC_ENZYMES"/>
    <property type="match status" value="1"/>
</dbReference>
<protein>
    <recommendedName>
        <fullName evidence="9">NADP-dependent malic enzyme</fullName>
        <shortName>NADP-ME</shortName>
        <ecNumber evidence="4 5 6 7">1.1.1.40</ecNumber>
    </recommendedName>
    <alternativeName>
        <fullName>Malic enzyme 1</fullName>
    </alternativeName>
</protein>
<gene>
    <name evidence="11" type="primary">ME1</name>
</gene>
<proteinExistence type="evidence at protein level"/>
<name>MAOX_HUMAN</name>
<reference key="1">
    <citation type="journal article" date="1994" name="FEBS Lett.">
        <title>Characterization of cytosolic malic enzyme in human tumor cells.</title>
        <authorList>
            <person name="Loeber G."/>
            <person name="Dworkin M.B."/>
            <person name="Infante A."/>
            <person name="Ahorn H."/>
        </authorList>
    </citation>
    <scope>NUCLEOTIDE SEQUENCE [MRNA] (ISOFORM 1)</scope>
    <scope>SUBCELLULAR LOCATION</scope>
    <scope>TISSUE SPECIFICITY</scope>
    <scope>CATALYTIC ACTIVITY</scope>
    <scope>FUNCTION</scope>
    <scope>BIOPHYSICOCHEMICAL PROPERTIES</scope>
    <source>
        <tissue>White adipose tissue</tissue>
    </source>
</reference>
<reference key="2">
    <citation type="journal article" date="1995" name="Gene">
        <title>Cloning, sequencing and functional expression of a cDNA encoding a NADP-dependent malic enzyme from human liver.</title>
        <authorList>
            <person name="Gonzalez-Manchon C."/>
            <person name="Ferrer M."/>
            <person name="Ayuso M.S."/>
            <person name="Parrilla R."/>
        </authorList>
    </citation>
    <scope>NUCLEOTIDE SEQUENCE [MRNA] (ISOFORM 1)</scope>
    <scope>TISSUE SPECIFICITY</scope>
    <scope>FUNCTION</scope>
    <scope>CATALYTIC ACTIVITY</scope>
    <scope>BIOPHYSICOCHEMICAL PROPERTIES</scope>
    <scope>COFACTOR</scope>
    <source>
        <tissue>Liver</tissue>
    </source>
</reference>
<reference key="3">
    <citation type="journal article" date="2004" name="Nat. Genet.">
        <title>Complete sequencing and characterization of 21,243 full-length human cDNAs.</title>
        <authorList>
            <person name="Ota T."/>
            <person name="Suzuki Y."/>
            <person name="Nishikawa T."/>
            <person name="Otsuki T."/>
            <person name="Sugiyama T."/>
            <person name="Irie R."/>
            <person name="Wakamatsu A."/>
            <person name="Hayashi K."/>
            <person name="Sato H."/>
            <person name="Nagai K."/>
            <person name="Kimura K."/>
            <person name="Makita H."/>
            <person name="Sekine M."/>
            <person name="Obayashi M."/>
            <person name="Nishi T."/>
            <person name="Shibahara T."/>
            <person name="Tanaka T."/>
            <person name="Ishii S."/>
            <person name="Yamamoto J."/>
            <person name="Saito K."/>
            <person name="Kawai Y."/>
            <person name="Isono Y."/>
            <person name="Nakamura Y."/>
            <person name="Nagahari K."/>
            <person name="Murakami K."/>
            <person name="Yasuda T."/>
            <person name="Iwayanagi T."/>
            <person name="Wagatsuma M."/>
            <person name="Shiratori A."/>
            <person name="Sudo H."/>
            <person name="Hosoiri T."/>
            <person name="Kaku Y."/>
            <person name="Kodaira H."/>
            <person name="Kondo H."/>
            <person name="Sugawara M."/>
            <person name="Takahashi M."/>
            <person name="Kanda K."/>
            <person name="Yokoi T."/>
            <person name="Furuya T."/>
            <person name="Kikkawa E."/>
            <person name="Omura Y."/>
            <person name="Abe K."/>
            <person name="Kamihara K."/>
            <person name="Katsuta N."/>
            <person name="Sato K."/>
            <person name="Tanikawa M."/>
            <person name="Yamazaki M."/>
            <person name="Ninomiya K."/>
            <person name="Ishibashi T."/>
            <person name="Yamashita H."/>
            <person name="Murakawa K."/>
            <person name="Fujimori K."/>
            <person name="Tanai H."/>
            <person name="Kimata M."/>
            <person name="Watanabe M."/>
            <person name="Hiraoka S."/>
            <person name="Chiba Y."/>
            <person name="Ishida S."/>
            <person name="Ono Y."/>
            <person name="Takiguchi S."/>
            <person name="Watanabe S."/>
            <person name="Yosida M."/>
            <person name="Hotuta T."/>
            <person name="Kusano J."/>
            <person name="Kanehori K."/>
            <person name="Takahashi-Fujii A."/>
            <person name="Hara H."/>
            <person name="Tanase T.-O."/>
            <person name="Nomura Y."/>
            <person name="Togiya S."/>
            <person name="Komai F."/>
            <person name="Hara R."/>
            <person name="Takeuchi K."/>
            <person name="Arita M."/>
            <person name="Imose N."/>
            <person name="Musashino K."/>
            <person name="Yuuki H."/>
            <person name="Oshima A."/>
            <person name="Sasaki N."/>
            <person name="Aotsuka S."/>
            <person name="Yoshikawa Y."/>
            <person name="Matsunawa H."/>
            <person name="Ichihara T."/>
            <person name="Shiohata N."/>
            <person name="Sano S."/>
            <person name="Moriya S."/>
            <person name="Momiyama H."/>
            <person name="Satoh N."/>
            <person name="Takami S."/>
            <person name="Terashima Y."/>
            <person name="Suzuki O."/>
            <person name="Nakagawa S."/>
            <person name="Senoh A."/>
            <person name="Mizoguchi H."/>
            <person name="Goto Y."/>
            <person name="Shimizu F."/>
            <person name="Wakebe H."/>
            <person name="Hishigaki H."/>
            <person name="Watanabe T."/>
            <person name="Sugiyama A."/>
            <person name="Takemoto M."/>
            <person name="Kawakami B."/>
            <person name="Yamazaki M."/>
            <person name="Watanabe K."/>
            <person name="Kumagai A."/>
            <person name="Itakura S."/>
            <person name="Fukuzumi Y."/>
            <person name="Fujimori Y."/>
            <person name="Komiyama M."/>
            <person name="Tashiro H."/>
            <person name="Tanigami A."/>
            <person name="Fujiwara T."/>
            <person name="Ono T."/>
            <person name="Yamada K."/>
            <person name="Fujii Y."/>
            <person name="Ozaki K."/>
            <person name="Hirao M."/>
            <person name="Ohmori Y."/>
            <person name="Kawabata A."/>
            <person name="Hikiji T."/>
            <person name="Kobatake N."/>
            <person name="Inagaki H."/>
            <person name="Ikema Y."/>
            <person name="Okamoto S."/>
            <person name="Okitani R."/>
            <person name="Kawakami T."/>
            <person name="Noguchi S."/>
            <person name="Itoh T."/>
            <person name="Shigeta K."/>
            <person name="Senba T."/>
            <person name="Matsumura K."/>
            <person name="Nakajima Y."/>
            <person name="Mizuno T."/>
            <person name="Morinaga M."/>
            <person name="Sasaki M."/>
            <person name="Togashi T."/>
            <person name="Oyama M."/>
            <person name="Hata H."/>
            <person name="Watanabe M."/>
            <person name="Komatsu T."/>
            <person name="Mizushima-Sugano J."/>
            <person name="Satoh T."/>
            <person name="Shirai Y."/>
            <person name="Takahashi Y."/>
            <person name="Nakagawa K."/>
            <person name="Okumura K."/>
            <person name="Nagase T."/>
            <person name="Nomura N."/>
            <person name="Kikuchi H."/>
            <person name="Masuho Y."/>
            <person name="Yamashita R."/>
            <person name="Nakai K."/>
            <person name="Yada T."/>
            <person name="Nakamura Y."/>
            <person name="Ohara O."/>
            <person name="Isogai T."/>
            <person name="Sugano S."/>
        </authorList>
    </citation>
    <scope>NUCLEOTIDE SEQUENCE [LARGE SCALE MRNA] (ISOFORM 2)</scope>
    <source>
        <tissue>Testis</tissue>
    </source>
</reference>
<reference key="4">
    <citation type="submission" date="2005-04" db="EMBL/GenBank/DDBJ databases">
        <authorList>
            <person name="Totoki Y."/>
            <person name="Toyoda A."/>
            <person name="Takeda T."/>
            <person name="Sakaki Y."/>
            <person name="Tanaka A."/>
            <person name="Yokoyama S."/>
        </authorList>
    </citation>
    <scope>NUCLEOTIDE SEQUENCE [LARGE SCALE MRNA] (ISOFORM 1)</scope>
</reference>
<reference key="5">
    <citation type="journal article" date="2003" name="Nature">
        <title>The DNA sequence and analysis of human chromosome 6.</title>
        <authorList>
            <person name="Mungall A.J."/>
            <person name="Palmer S.A."/>
            <person name="Sims S.K."/>
            <person name="Edwards C.A."/>
            <person name="Ashurst J.L."/>
            <person name="Wilming L."/>
            <person name="Jones M.C."/>
            <person name="Horton R."/>
            <person name="Hunt S.E."/>
            <person name="Scott C.E."/>
            <person name="Gilbert J.G.R."/>
            <person name="Clamp M.E."/>
            <person name="Bethel G."/>
            <person name="Milne S."/>
            <person name="Ainscough R."/>
            <person name="Almeida J.P."/>
            <person name="Ambrose K.D."/>
            <person name="Andrews T.D."/>
            <person name="Ashwell R.I.S."/>
            <person name="Babbage A.K."/>
            <person name="Bagguley C.L."/>
            <person name="Bailey J."/>
            <person name="Banerjee R."/>
            <person name="Barker D.J."/>
            <person name="Barlow K.F."/>
            <person name="Bates K."/>
            <person name="Beare D.M."/>
            <person name="Beasley H."/>
            <person name="Beasley O."/>
            <person name="Bird C.P."/>
            <person name="Blakey S.E."/>
            <person name="Bray-Allen S."/>
            <person name="Brook J."/>
            <person name="Brown A.J."/>
            <person name="Brown J.Y."/>
            <person name="Burford D.C."/>
            <person name="Burrill W."/>
            <person name="Burton J."/>
            <person name="Carder C."/>
            <person name="Carter N.P."/>
            <person name="Chapman J.C."/>
            <person name="Clark S.Y."/>
            <person name="Clark G."/>
            <person name="Clee C.M."/>
            <person name="Clegg S."/>
            <person name="Cobley V."/>
            <person name="Collier R.E."/>
            <person name="Collins J.E."/>
            <person name="Colman L.K."/>
            <person name="Corby N.R."/>
            <person name="Coville G.J."/>
            <person name="Culley K.M."/>
            <person name="Dhami P."/>
            <person name="Davies J."/>
            <person name="Dunn M."/>
            <person name="Earthrowl M.E."/>
            <person name="Ellington A.E."/>
            <person name="Evans K.A."/>
            <person name="Faulkner L."/>
            <person name="Francis M.D."/>
            <person name="Frankish A."/>
            <person name="Frankland J."/>
            <person name="French L."/>
            <person name="Garner P."/>
            <person name="Garnett J."/>
            <person name="Ghori M.J."/>
            <person name="Gilby L.M."/>
            <person name="Gillson C.J."/>
            <person name="Glithero R.J."/>
            <person name="Grafham D.V."/>
            <person name="Grant M."/>
            <person name="Gribble S."/>
            <person name="Griffiths C."/>
            <person name="Griffiths M.N.D."/>
            <person name="Hall R."/>
            <person name="Halls K.S."/>
            <person name="Hammond S."/>
            <person name="Harley J.L."/>
            <person name="Hart E.A."/>
            <person name="Heath P.D."/>
            <person name="Heathcott R."/>
            <person name="Holmes S.J."/>
            <person name="Howden P.J."/>
            <person name="Howe K.L."/>
            <person name="Howell G.R."/>
            <person name="Huckle E."/>
            <person name="Humphray S.J."/>
            <person name="Humphries M.D."/>
            <person name="Hunt A.R."/>
            <person name="Johnson C.M."/>
            <person name="Joy A.A."/>
            <person name="Kay M."/>
            <person name="Keenan S.J."/>
            <person name="Kimberley A.M."/>
            <person name="King A."/>
            <person name="Laird G.K."/>
            <person name="Langford C."/>
            <person name="Lawlor S."/>
            <person name="Leongamornlert D.A."/>
            <person name="Leversha M."/>
            <person name="Lloyd C.R."/>
            <person name="Lloyd D.M."/>
            <person name="Loveland J.E."/>
            <person name="Lovell J."/>
            <person name="Martin S."/>
            <person name="Mashreghi-Mohammadi M."/>
            <person name="Maslen G.L."/>
            <person name="Matthews L."/>
            <person name="McCann O.T."/>
            <person name="McLaren S.J."/>
            <person name="McLay K."/>
            <person name="McMurray A."/>
            <person name="Moore M.J.F."/>
            <person name="Mullikin J.C."/>
            <person name="Niblett D."/>
            <person name="Nickerson T."/>
            <person name="Novik K.L."/>
            <person name="Oliver K."/>
            <person name="Overton-Larty E.K."/>
            <person name="Parker A."/>
            <person name="Patel R."/>
            <person name="Pearce A.V."/>
            <person name="Peck A.I."/>
            <person name="Phillimore B.J.C.T."/>
            <person name="Phillips S."/>
            <person name="Plumb R.W."/>
            <person name="Porter K.M."/>
            <person name="Ramsey Y."/>
            <person name="Ranby S.A."/>
            <person name="Rice C.M."/>
            <person name="Ross M.T."/>
            <person name="Searle S.M."/>
            <person name="Sehra H.K."/>
            <person name="Sheridan E."/>
            <person name="Skuce C.D."/>
            <person name="Smith S."/>
            <person name="Smith M."/>
            <person name="Spraggon L."/>
            <person name="Squares S.L."/>
            <person name="Steward C.A."/>
            <person name="Sycamore N."/>
            <person name="Tamlyn-Hall G."/>
            <person name="Tester J."/>
            <person name="Theaker A.J."/>
            <person name="Thomas D.W."/>
            <person name="Thorpe A."/>
            <person name="Tracey A."/>
            <person name="Tromans A."/>
            <person name="Tubby B."/>
            <person name="Wall M."/>
            <person name="Wallis J.M."/>
            <person name="West A.P."/>
            <person name="White S.S."/>
            <person name="Whitehead S.L."/>
            <person name="Whittaker H."/>
            <person name="Wild A."/>
            <person name="Willey D.J."/>
            <person name="Wilmer T.E."/>
            <person name="Wood J.M."/>
            <person name="Wray P.W."/>
            <person name="Wyatt J.C."/>
            <person name="Young L."/>
            <person name="Younger R.M."/>
            <person name="Bentley D.R."/>
            <person name="Coulson A."/>
            <person name="Durbin R.M."/>
            <person name="Hubbard T."/>
            <person name="Sulston J.E."/>
            <person name="Dunham I."/>
            <person name="Rogers J."/>
            <person name="Beck S."/>
        </authorList>
    </citation>
    <scope>NUCLEOTIDE SEQUENCE [LARGE SCALE GENOMIC DNA]</scope>
</reference>
<reference key="6">
    <citation type="journal article" date="2004" name="Genome Res.">
        <title>The status, quality, and expansion of the NIH full-length cDNA project: the Mammalian Gene Collection (MGC).</title>
        <authorList>
            <consortium name="The MGC Project Team"/>
        </authorList>
    </citation>
    <scope>NUCLEOTIDE SEQUENCE [LARGE SCALE MRNA] (ISOFORM 1)</scope>
    <source>
        <tissue>Skin</tissue>
    </source>
</reference>
<reference key="7">
    <citation type="journal article" date="1996" name="J. Protein Chem.">
        <title>Nonidentity of the cDNA sequence of human breast cancer cell malic enzyme to that from the normal human cell.</title>
        <authorList>
            <person name="Chou W.Y."/>
            <person name="Huang S.M."/>
            <person name="Chang G.G."/>
        </authorList>
    </citation>
    <scope>NUCLEOTIDE SEQUENCE [MRNA] OF 8-572 (ISOFORM 1)</scope>
    <scope>FUNCTION</scope>
    <scope>CATALYTIC ACTIVITY</scope>
    <scope>BIOPHYSICOCHEMICAL PROPERTIES</scope>
    <scope>COFACTOR</scope>
</reference>
<reference key="8">
    <citation type="journal article" date="1995" name="Int. J. Biochem. Cell Biol.">
        <title>Purification and properties of cytosolic and mitochondrial malic enzyme isolated from human brain.</title>
        <authorList>
            <person name="Bukato G."/>
            <person name="Kochan Z."/>
            <person name="Swierczynski J."/>
        </authorList>
    </citation>
    <scope>FUNCTION</scope>
    <scope>CATALYTIC ACTIVITY</scope>
    <scope>SUBUNIT</scope>
    <scope>BIOPHYSICOCHEMICAL PROPERTIES</scope>
    <scope>COFACTOR</scope>
</reference>
<reference key="9">
    <citation type="journal article" date="2009" name="Anal. Chem.">
        <title>Lys-N and trypsin cover complementary parts of the phosphoproteome in a refined SCX-based approach.</title>
        <authorList>
            <person name="Gauci S."/>
            <person name="Helbig A.O."/>
            <person name="Slijper M."/>
            <person name="Krijgsveld J."/>
            <person name="Heck A.J."/>
            <person name="Mohammed S."/>
        </authorList>
    </citation>
    <scope>ACETYLATION [LARGE SCALE ANALYSIS] AT MET-1</scope>
    <scope>IDENTIFICATION BY MASS SPECTROMETRY [LARGE SCALE ANALYSIS]</scope>
</reference>
<reference key="10">
    <citation type="journal article" date="2011" name="BMC Syst. Biol.">
        <title>Initial characterization of the human central proteome.</title>
        <authorList>
            <person name="Burkard T.R."/>
            <person name="Planyavsky M."/>
            <person name="Kaupe I."/>
            <person name="Breitwieser F.P."/>
            <person name="Buerckstuemmer T."/>
            <person name="Bennett K.L."/>
            <person name="Superti-Furga G."/>
            <person name="Colinge J."/>
        </authorList>
    </citation>
    <scope>IDENTIFICATION BY MASS SPECTROMETRY [LARGE SCALE ANALYSIS]</scope>
</reference>
<reference key="11">
    <citation type="submission" date="2007-03" db="PDB data bank">
        <title>Crystal structure of a human malic enzyme.</title>
        <authorList>
            <consortium name="Structural genomics consortium (SGC)"/>
        </authorList>
    </citation>
    <scope>X-RAY CRYSTALLOGRAPHY (2.5 ANGSTROMS) OF 15-555</scope>
</reference>